<proteinExistence type="evidence at protein level"/>
<name>AIMP1_MOUSE</name>
<dbReference type="EMBL" id="U10118">
    <property type="protein sequence ID" value="AAA62203.1"/>
    <property type="molecule type" value="mRNA"/>
</dbReference>
<dbReference type="EMBL" id="BC002054">
    <property type="protein sequence ID" value="AAH02054.1"/>
    <property type="molecule type" value="mRNA"/>
</dbReference>
<dbReference type="CCDS" id="CCDS89689.1"/>
<dbReference type="PIR" id="A55053">
    <property type="entry name" value="A55053"/>
</dbReference>
<dbReference type="RefSeq" id="NP_001355555.1">
    <property type="nucleotide sequence ID" value="NM_001368626.1"/>
</dbReference>
<dbReference type="SMR" id="P31230"/>
<dbReference type="FunCoup" id="P31230">
    <property type="interactions" value="2049"/>
</dbReference>
<dbReference type="IntAct" id="P31230">
    <property type="interactions" value="2"/>
</dbReference>
<dbReference type="STRING" id="10090.ENSMUSP00000029663"/>
<dbReference type="MoonProt" id="P31230"/>
<dbReference type="GlyGen" id="P31230">
    <property type="glycosylation" value="8 sites, 1 N-linked glycan (1 site), 1 O-linked glycan (7 sites)"/>
</dbReference>
<dbReference type="iPTMnet" id="P31230"/>
<dbReference type="PhosphoSitePlus" id="P31230"/>
<dbReference type="SwissPalm" id="P31230"/>
<dbReference type="CPTAC" id="non-CPTAC-3361"/>
<dbReference type="jPOST" id="P31230"/>
<dbReference type="PaxDb" id="10090-ENSMUSP00000029663"/>
<dbReference type="PeptideAtlas" id="P31230"/>
<dbReference type="ProteomicsDB" id="285787"/>
<dbReference type="Pumba" id="P31230"/>
<dbReference type="Antibodypedia" id="4317">
    <property type="antibodies" value="615 antibodies from 45 providers"/>
</dbReference>
<dbReference type="Ensembl" id="ENSMUST00000198513.6">
    <property type="protein sequence ID" value="ENSMUSP00000142513.3"/>
    <property type="gene ID" value="ENSMUSG00000028029.12"/>
</dbReference>
<dbReference type="GeneID" id="13722"/>
<dbReference type="AGR" id="MGI:102774"/>
<dbReference type="MGI" id="MGI:102774">
    <property type="gene designation" value="Aimp1"/>
</dbReference>
<dbReference type="VEuPathDB" id="HostDB:ENSMUSG00000028029"/>
<dbReference type="eggNOG" id="KOG2241">
    <property type="taxonomic scope" value="Eukaryota"/>
</dbReference>
<dbReference type="GeneTree" id="ENSGT00940000154950"/>
<dbReference type="InParanoid" id="P31230"/>
<dbReference type="OrthoDB" id="197206at2759"/>
<dbReference type="PhylomeDB" id="P31230"/>
<dbReference type="Reactome" id="R-MMU-9856649">
    <property type="pathway name" value="Transcriptional and post-translational regulation of MITF-M expression and activity"/>
</dbReference>
<dbReference type="ChiTaRS" id="Aimp1">
    <property type="organism name" value="mouse"/>
</dbReference>
<dbReference type="PRO" id="PR:P31230"/>
<dbReference type="Proteomes" id="UP000000589">
    <property type="component" value="Chromosome 3"/>
</dbReference>
<dbReference type="RNAct" id="P31230">
    <property type="molecule type" value="protein"/>
</dbReference>
<dbReference type="Bgee" id="ENSMUSG00000028029">
    <property type="expression patterns" value="Expressed in urogenital fold and 295 other cell types or tissues"/>
</dbReference>
<dbReference type="ExpressionAtlas" id="P31230">
    <property type="expression patterns" value="baseline and differential"/>
</dbReference>
<dbReference type="GO" id="GO:0017101">
    <property type="term" value="C:aminoacyl-tRNA synthetase multienzyme complex"/>
    <property type="evidence" value="ECO:0000314"/>
    <property type="project" value="CAFA"/>
</dbReference>
<dbReference type="GO" id="GO:0009986">
    <property type="term" value="C:cell surface"/>
    <property type="evidence" value="ECO:0000250"/>
    <property type="project" value="HGNC"/>
</dbReference>
<dbReference type="GO" id="GO:0005829">
    <property type="term" value="C:cytosol"/>
    <property type="evidence" value="ECO:0007669"/>
    <property type="project" value="UniProtKB-SubCell"/>
</dbReference>
<dbReference type="GO" id="GO:0005783">
    <property type="term" value="C:endoplasmic reticulum"/>
    <property type="evidence" value="ECO:0007669"/>
    <property type="project" value="UniProtKB-SubCell"/>
</dbReference>
<dbReference type="GO" id="GO:0005615">
    <property type="term" value="C:extracellular space"/>
    <property type="evidence" value="ECO:0000314"/>
    <property type="project" value="UniProtKB"/>
</dbReference>
<dbReference type="GO" id="GO:0005794">
    <property type="term" value="C:Golgi apparatus"/>
    <property type="evidence" value="ECO:0007669"/>
    <property type="project" value="UniProtKB-SubCell"/>
</dbReference>
<dbReference type="GO" id="GO:0005634">
    <property type="term" value="C:nucleus"/>
    <property type="evidence" value="ECO:0007669"/>
    <property type="project" value="UniProtKB-SubCell"/>
</dbReference>
<dbReference type="GO" id="GO:0005125">
    <property type="term" value="F:cytokine activity"/>
    <property type="evidence" value="ECO:0000314"/>
    <property type="project" value="HGNC-UCL"/>
</dbReference>
<dbReference type="GO" id="GO:0042803">
    <property type="term" value="F:protein homodimerization activity"/>
    <property type="evidence" value="ECO:0000250"/>
    <property type="project" value="HGNC-UCL"/>
</dbReference>
<dbReference type="GO" id="GO:0000049">
    <property type="term" value="F:tRNA binding"/>
    <property type="evidence" value="ECO:0000250"/>
    <property type="project" value="HGNC-UCL"/>
</dbReference>
<dbReference type="GO" id="GO:0001525">
    <property type="term" value="P:angiogenesis"/>
    <property type="evidence" value="ECO:0007669"/>
    <property type="project" value="UniProtKB-KW"/>
</dbReference>
<dbReference type="GO" id="GO:0006915">
    <property type="term" value="P:apoptotic process"/>
    <property type="evidence" value="ECO:0007669"/>
    <property type="project" value="UniProtKB-KW"/>
</dbReference>
<dbReference type="GO" id="GO:0006954">
    <property type="term" value="P:inflammatory response"/>
    <property type="evidence" value="ECO:0007669"/>
    <property type="project" value="UniProtKB-KW"/>
</dbReference>
<dbReference type="GO" id="GO:0050900">
    <property type="term" value="P:leukocyte migration"/>
    <property type="evidence" value="ECO:0000314"/>
    <property type="project" value="HGNC-UCL"/>
</dbReference>
<dbReference type="GO" id="GO:0001937">
    <property type="term" value="P:negative regulation of endothelial cell proliferation"/>
    <property type="evidence" value="ECO:0000250"/>
    <property type="project" value="HGNC-UCL"/>
</dbReference>
<dbReference type="GO" id="GO:0070094">
    <property type="term" value="P:positive regulation of glucagon secretion"/>
    <property type="evidence" value="ECO:0000314"/>
    <property type="project" value="UniProtKB"/>
</dbReference>
<dbReference type="GO" id="GO:0006412">
    <property type="term" value="P:translation"/>
    <property type="evidence" value="ECO:0007669"/>
    <property type="project" value="UniProtKB-KW"/>
</dbReference>
<dbReference type="CDD" id="cd02799">
    <property type="entry name" value="tRNA_bind_EMAP-II_like"/>
    <property type="match status" value="1"/>
</dbReference>
<dbReference type="FunFam" id="2.40.50.140:FF:000047">
    <property type="entry name" value="tyrosine--tRNA ligase, cytoplasmic isoform X2"/>
    <property type="match status" value="1"/>
</dbReference>
<dbReference type="Gene3D" id="2.40.50.140">
    <property type="entry name" value="Nucleic acid-binding proteins"/>
    <property type="match status" value="1"/>
</dbReference>
<dbReference type="InterPro" id="IPR012340">
    <property type="entry name" value="NA-bd_OB-fold"/>
</dbReference>
<dbReference type="InterPro" id="IPR002547">
    <property type="entry name" value="tRNA-bd_dom"/>
</dbReference>
<dbReference type="InterPro" id="IPR051270">
    <property type="entry name" value="Tyrosine-tRNA_ligase_regulator"/>
</dbReference>
<dbReference type="PANTHER" id="PTHR11586:SF33">
    <property type="entry name" value="AMINOACYL TRNA SYNTHASE COMPLEX-INTERACTING MULTIFUNCTIONAL PROTEIN 1"/>
    <property type="match status" value="1"/>
</dbReference>
<dbReference type="PANTHER" id="PTHR11586">
    <property type="entry name" value="TRNA-AMINOACYLATION COFACTOR ARC1 FAMILY MEMBER"/>
    <property type="match status" value="1"/>
</dbReference>
<dbReference type="Pfam" id="PF01588">
    <property type="entry name" value="tRNA_bind"/>
    <property type="match status" value="1"/>
</dbReference>
<dbReference type="SUPFAM" id="SSF50249">
    <property type="entry name" value="Nucleic acid-binding proteins"/>
    <property type="match status" value="1"/>
</dbReference>
<dbReference type="PROSITE" id="PS50886">
    <property type="entry name" value="TRBD"/>
    <property type="match status" value="1"/>
</dbReference>
<sequence>MATNDAVLKRLEQKGAEADQIIEYLKQQVALLKEKAILQATMREEKKLRVENAKLKKEIEELKQELILAEIHNGVEQVRVRLSTPLQTNCTASESVVQSPSVATTASPATKEQIKAGEEKKVKEKTEKKGEKKEKQQSAAASTDSKPIDASRLDLRIGCIVTAKKHPDADSLYVEEVDVGEAAPRTVVSGLVNHVPLEQMQNRMVVLLCNLKPAKMRGVLSQAMVMCASSPEKVEILAPPNGSVPGDRITFDAFPGEPDKELNPKKKIWEQIQPDLHTNAECVATYKGAPFEVKGKGVCRAQTMANSGIK</sequence>
<accession>P31230</accession>
<accession>Q60659</accession>
<evidence type="ECO:0000250" key="1"/>
<evidence type="ECO:0000250" key="2">
    <source>
        <dbReference type="UniProtKB" id="Q12904"/>
    </source>
</evidence>
<evidence type="ECO:0000255" key="3">
    <source>
        <dbReference type="PROSITE-ProRule" id="PRU00209"/>
    </source>
</evidence>
<evidence type="ECO:0000256" key="4">
    <source>
        <dbReference type="SAM" id="MobiDB-lite"/>
    </source>
</evidence>
<evidence type="ECO:0000269" key="5">
    <source>
    </source>
</evidence>
<evidence type="ECO:0000269" key="6">
    <source>
    </source>
</evidence>
<evidence type="ECO:0000269" key="7">
    <source>
    </source>
</evidence>
<evidence type="ECO:0000269" key="8">
    <source>
    </source>
</evidence>
<evidence type="ECO:0000269" key="9">
    <source>
    </source>
</evidence>
<evidence type="ECO:0000269" key="10">
    <source>
    </source>
</evidence>
<evidence type="ECO:0000269" key="11">
    <source>
    </source>
</evidence>
<evidence type="ECO:0000269" key="12">
    <source>
    </source>
</evidence>
<evidence type="ECO:0000269" key="13">
    <source>
    </source>
</evidence>
<evidence type="ECO:0000269" key="14">
    <source>
    </source>
</evidence>
<evidence type="ECO:0000303" key="15">
    <source>
    </source>
</evidence>
<evidence type="ECO:0007744" key="16">
    <source>
    </source>
</evidence>
<reference key="1">
    <citation type="journal article" date="1994" name="J. Biol. Chem.">
        <title>Characterization of a novel tumor-derived cytokine. Endothelial-monocyte activating polypeptide II.</title>
        <authorList>
            <person name="Kao J."/>
            <person name="Houck K."/>
            <person name="Fan Y."/>
            <person name="Haehnel I."/>
            <person name="Libutti S.K."/>
            <person name="Kayton M.L."/>
            <person name="Grikscheit T."/>
            <person name="Chabot J."/>
            <person name="Nowygrod R."/>
            <person name="Greenberg S."/>
            <person name="Kuang W.J."/>
            <person name="Leung D.W."/>
            <person name="Hayward J.R."/>
            <person name="Kisiel W."/>
            <person name="Heath M."/>
            <person name="Brett J."/>
            <person name="Stern D.M."/>
        </authorList>
    </citation>
    <scope>NUCLEOTIDE SEQUENCE [MRNA]</scope>
</reference>
<reference key="2">
    <citation type="journal article" date="2004" name="Genome Res.">
        <title>The status, quality, and expansion of the NIH full-length cDNA project: the Mammalian Gene Collection (MGC).</title>
        <authorList>
            <consortium name="The MGC Project Team"/>
        </authorList>
    </citation>
    <scope>NUCLEOTIDE SEQUENCE [LARGE SCALE MRNA]</scope>
</reference>
<reference key="3">
    <citation type="journal article" date="1992" name="J. Biol. Chem.">
        <title>Endothelial monocyte-activating polypeptide II. A novel tumor-derived polypeptide that activates host-response mechanisms.</title>
        <authorList>
            <person name="Kao J."/>
            <person name="Ryan J."/>
            <person name="Brett G."/>
            <person name="Chen J."/>
            <person name="Shen H."/>
            <person name="Fan Y.-G."/>
            <person name="Godman G."/>
            <person name="Familletti P.C."/>
            <person name="Wang F."/>
            <person name="Pan Y.-C.E."/>
            <person name="Stern D."/>
            <person name="Clauss M."/>
        </authorList>
    </citation>
    <scope>PROTEIN SEQUENCE OF 145-164</scope>
    <scope>FUNCTION</scope>
</reference>
<reference key="4">
    <citation type="journal article" date="1994" name="J. Biol. Chem.">
        <title>A peptide derived from the amino terminus of endothelial-monocyte-activating polypeptide II modulates mononuclear and polymorphonuclear leukocyte functions, defines an apparently novel cellular interaction site, and induces an acute inflammatory response.</title>
        <authorList>
            <person name="Kao J."/>
            <person name="Fan Y."/>
            <person name="Haehnel I."/>
            <person name="Brett J."/>
            <person name="Greenberg S."/>
            <person name="Clauss M."/>
            <person name="Kayton M."/>
            <person name="Houck K."/>
            <person name="Kisiel W."/>
            <person name="Seljelid R."/>
            <person name="Burnier J."/>
            <person name="Stern D."/>
        </authorList>
    </citation>
    <scope>FUNCTION</scope>
</reference>
<reference key="5">
    <citation type="journal article" date="1998" name="Proc. Natl. Acad. Sci. U.S.A.">
        <title>Regulation of endothelial monocyte-activating polypeptide II release by apoptosis.</title>
        <authorList>
            <person name="Knies U.E."/>
            <person name="Behrensdorf H.A."/>
            <person name="Mitchell C.A."/>
            <person name="Deutsch U."/>
            <person name="Risau W."/>
            <person name="Drexler H.C.A."/>
            <person name="Clauss M."/>
        </authorList>
    </citation>
    <scope>SUBCELLULAR LOCATION</scope>
    <scope>TISSUE SPECIFICITY</scope>
</reference>
<reference key="6">
    <citation type="journal article" date="2001" name="J. Biol. Chem.">
        <title>The EMAPII cytokine is released from the mammalian multisynthetase complex after cleavage of its p43/proEMAPII component.</title>
        <authorList>
            <person name="Shalak V."/>
            <person name="Kaminska M."/>
            <person name="Mitnacht-Kraus R."/>
            <person name="Vandenabeele P."/>
            <person name="Clauss M."/>
            <person name="Mirande M."/>
        </authorList>
    </citation>
    <scope>CLEAVAGE</scope>
</reference>
<reference key="7">
    <citation type="journal article" date="2002" name="Proc. Natl. Acad. Sci. U.S.A.">
        <title>p38 is essential for the assembly and stability of macromolecular tRNA synthetase complex: implications for its physiological significance.</title>
        <authorList>
            <person name="Kim J.Y."/>
            <person name="Kang Y.-S."/>
            <person name="Lee J.-W."/>
            <person name="Kim H.J."/>
            <person name="Ahn Y.H."/>
            <person name="Park H."/>
            <person name="Ko Y.-G."/>
            <person name="Kim S."/>
        </authorList>
    </citation>
    <scope>SUBUNIT</scope>
    <scope>FUNCTION</scope>
</reference>
<reference key="8">
    <citation type="journal article" date="2005" name="Am. J. Pathol.">
        <title>The novel cytokine p43 stimulates dermal fibroblast proliferation and wound repair.</title>
        <authorList>
            <person name="Park S.G."/>
            <person name="Shin H."/>
            <person name="Shin Y.K."/>
            <person name="Lee Y."/>
            <person name="Choi E.-C."/>
            <person name="Park B.-J."/>
            <person name="Kim S."/>
        </authorList>
    </citation>
    <scope>FUNCTION</scope>
</reference>
<reference key="9">
    <citation type="journal article" date="2006" name="Proc. Natl. Acad. Sci. U.S.A.">
        <title>Hormonal activity of AIMP1/p43 for glucose homeostasis.</title>
        <authorList>
            <person name="Park S.G."/>
            <person name="Kang Y.S."/>
            <person name="Kim J.Y."/>
            <person name="Lee C.S."/>
            <person name="Ko Y.G."/>
            <person name="Lee W.J."/>
            <person name="Lee K.-U."/>
            <person name="Yeom Y.I."/>
            <person name="Kim S."/>
        </authorList>
    </citation>
    <scope>FUNCTION</scope>
    <scope>SUBCELLULAR LOCATION</scope>
    <scope>TISSUE SPECIFICITY</scope>
    <scope>DISRUPTION PHENOTYPE</scope>
</reference>
<reference key="10">
    <citation type="journal article" date="2007" name="Am. J. Pathol.">
        <title>Aminoacyl-tRNA synthetase-interacting multifunctional protein 1/p43 controls endoplasmic reticulum retention of heat shock protein gp96: its pathological implications in lupus-like autoimmune diseases.</title>
        <authorList>
            <person name="Han J.M."/>
            <person name="Park S.G."/>
            <person name="Liu B."/>
            <person name="Park B.-J."/>
            <person name="Kim J.Y."/>
            <person name="Jin C.H."/>
            <person name="Song Y.W."/>
            <person name="Li Z."/>
            <person name="Kim S."/>
        </authorList>
    </citation>
    <scope>FUNCTION</scope>
    <scope>INTERACTION WITH HSP90B1</scope>
    <scope>SUBCELLULAR LOCATION</scope>
    <scope>DISRUPTION PHENOTYPE</scope>
</reference>
<reference key="11">
    <citation type="journal article" date="2008" name="Biochem. Biophys. Res. Commun.">
        <title>AIMP1/p43 downregulates TGF-beta signaling via stabilization of smurf2.</title>
        <authorList>
            <person name="Lee Y.S."/>
            <person name="Han J.M."/>
            <person name="Son S.H."/>
            <person name="Choi J.W."/>
            <person name="Jeon E.J."/>
            <person name="Bae S.-C."/>
            <person name="Park Y.I."/>
            <person name="Kim S."/>
        </authorList>
    </citation>
    <scope>FUNCTION</scope>
    <scope>INTERACTION WITH SMURF2</scope>
    <scope>INDUCTION</scope>
</reference>
<reference key="12">
    <citation type="journal article" date="2008" name="J. Immunol.">
        <title>AIMP1/p43 protein induces the maturation of bone marrow-derived dendritic cells with T helper type 1-polarizing ability.</title>
        <authorList>
            <person name="Kim E."/>
            <person name="Kim S.H."/>
            <person name="Kim S."/>
            <person name="Cho D."/>
            <person name="Kim T.S."/>
        </authorList>
    </citation>
    <scope>FUNCTION</scope>
</reference>
<reference key="13">
    <citation type="journal article" date="2010" name="Cell">
        <title>A tissue-specific atlas of mouse protein phosphorylation and expression.</title>
        <authorList>
            <person name="Huttlin E.L."/>
            <person name="Jedrychowski M.P."/>
            <person name="Elias J.E."/>
            <person name="Goswami T."/>
            <person name="Rad R."/>
            <person name="Beausoleil S.A."/>
            <person name="Villen J."/>
            <person name="Haas W."/>
            <person name="Sowa M.E."/>
            <person name="Gygi S.P."/>
        </authorList>
    </citation>
    <scope>IDENTIFICATION BY MASS SPECTROMETRY [LARGE SCALE ANALYSIS]</scope>
    <source>
        <tissue>Brain</tissue>
        <tissue>Brown adipose tissue</tissue>
        <tissue>Heart</tissue>
        <tissue>Kidney</tissue>
        <tissue>Liver</tissue>
        <tissue>Lung</tissue>
        <tissue>Pancreas</tissue>
        <tissue>Spleen</tissue>
        <tissue>Testis</tissue>
    </source>
</reference>
<reference key="14">
    <citation type="journal article" date="2013" name="Mol. Cell">
        <title>SIRT5-mediated lysine desuccinylation impacts diverse metabolic pathways.</title>
        <authorList>
            <person name="Park J."/>
            <person name="Chen Y."/>
            <person name="Tishkoff D.X."/>
            <person name="Peng C."/>
            <person name="Tan M."/>
            <person name="Dai L."/>
            <person name="Xie Z."/>
            <person name="Zhang Y."/>
            <person name="Zwaans B.M."/>
            <person name="Skinner M.E."/>
            <person name="Lombard D.B."/>
            <person name="Zhao Y."/>
        </authorList>
    </citation>
    <scope>SUCCINYLATION [LARGE SCALE ANALYSIS] AT LYS-267</scope>
    <scope>IDENTIFICATION BY MASS SPECTROMETRY [LARGE SCALE ANALYSIS]</scope>
    <source>
        <tissue>Liver</tissue>
    </source>
</reference>
<organism>
    <name type="scientific">Mus musculus</name>
    <name type="common">Mouse</name>
    <dbReference type="NCBI Taxonomy" id="10090"/>
    <lineage>
        <taxon>Eukaryota</taxon>
        <taxon>Metazoa</taxon>
        <taxon>Chordata</taxon>
        <taxon>Craniata</taxon>
        <taxon>Vertebrata</taxon>
        <taxon>Euteleostomi</taxon>
        <taxon>Mammalia</taxon>
        <taxon>Eutheria</taxon>
        <taxon>Euarchontoglires</taxon>
        <taxon>Glires</taxon>
        <taxon>Rodentia</taxon>
        <taxon>Myomorpha</taxon>
        <taxon>Muroidea</taxon>
        <taxon>Muridae</taxon>
        <taxon>Murinae</taxon>
        <taxon>Mus</taxon>
        <taxon>Mus</taxon>
    </lineage>
</organism>
<gene>
    <name type="primary">Aimp1</name>
    <name type="synonym">Emap2</name>
    <name type="synonym">Scye1</name>
</gene>
<comment type="function">
    <text evidence="2 6 7 8 9 10 11 12 13">Non-catalytic component of the multisynthase complex (PubMed:12060739). Stimulates the catalytic activity of cytoplasmic arginyl-tRNA synthase (By similarity). Binds tRNA. Possesses inflammatory cytokine activity (PubMed:1400342, PubMed:7545917). Negatively regulates TGF-beta signaling through stabilization of SMURF2 by binding to SMURF2 and inhibiting its SMAD7-mediated degradation (PubMed:18448069). Involved in glucose homeostasis through induction of glucagon secretion at low glucose levels (PubMed:17001013). Promotes dermal fibroblast proliferation and wound repair (PubMed:15681823). Regulates KDELR1-mediated retention of HSP90B1/gp96 in the endoplasmic reticulum (PubMed:17525271). Plays a role in angiogenesis by inducing endothelial cell migration at low concentrations and endothelian cell apoptosis at high concentrations (By similarity). Induces maturation of dendritic cells and monocyte cell adhesion (PubMed:18292511). Modulates endothelial cell responses by degrading HIF-1A through interaction with PSMA7 (By similarity).</text>
</comment>
<comment type="subunit">
    <text evidence="2 6 10 12">Homodimer. Part of the multisynthetase complex (MSC), a multisubunit complex that groups tRNA ligases for Arg (RARS1), Asp (DARS1), Gln (QARS1), Ile (IARS1), Leu (LARS1), Lys (KARS1), Met (MARS1) the bifunctional ligase for Glu and Pro (EPRS1) and the auxiliary subunits AIMP1/p43, AIMP2/p38 and EEF1E1/p18 (PubMed:12060739). Interacts (via N-terminus) with RARS1 (via N-terminus). Part of a complex composed of RARS1, QARS1 and AIMP1. Interacts (via C-terminus) with SMURF2 (PubMed:18448069). Interacts (via N-terminus) with HSP90B1/gp96 (via C-terminus) (PubMed:17525271). Interacts with PSMA7 (By similarity). Interacts with TARS3.</text>
</comment>
<comment type="subcellular location">
    <subcellularLocation>
        <location evidence="2">Nucleus</location>
    </subcellularLocation>
    <subcellularLocation>
        <location evidence="2">Cytoplasm</location>
        <location evidence="2">Cytosol</location>
    </subcellularLocation>
    <subcellularLocation>
        <location evidence="9 14">Secreted</location>
    </subcellularLocation>
    <subcellularLocation>
        <location evidence="10">Endoplasmic reticulum</location>
    </subcellularLocation>
    <subcellularLocation>
        <location evidence="10">Golgi apparatus</location>
    </subcellularLocation>
    <text evidence="2 9">Enriched in secretory vesicles of pancreatic alpha cells and secreted from the pancreas in response to low glucose levels (PubMed:17001013). Secreted in response to hypoxia (By similarity). Also secreted in response to both apoptotic and necrotic cell death.</text>
</comment>
<comment type="tissue specificity">
    <text evidence="9 14">Highly expressed in salivary glands and pancreatic alpha cells in the adult (at protein level) (PubMed:17001013). In the embryo, expressed primarily at sites of tissue remodeling such as ganglia, developing bones and teeth (PubMed:9770485).</text>
</comment>
<comment type="induction">
    <text evidence="12">By wounding.</text>
</comment>
<comment type="PTM">
    <text evidence="5">Cleaved by caspase-7 in response to apoptosis to produce EMAP-II.</text>
</comment>
<comment type="disruption phenotype">
    <text evidence="9 10">Increased Hsp90b1 surface expression, dendritic cell hyperactivation and development of lupus-like autoimmune phenotypes (PubMed:17525271). Retarded growth after birth, reduced food intake, reduced plasma levels of glucose, free fatty acid, glucagon and insulin, increased glycogen content in the liver, and rapid decrease in blood glucose concentration upon fasting (PubMed:17001013).</text>
</comment>
<protein>
    <recommendedName>
        <fullName>Aminoacyl tRNA synthase complex-interacting multifunctional protein 1</fullName>
    </recommendedName>
    <alternativeName>
        <fullName>Multisynthase complex auxiliary component p43</fullName>
    </alternativeName>
    <component>
        <recommendedName>
            <fullName>Endothelial monocyte-activating polypeptide 2</fullName>
            <shortName>EMAP-2</shortName>
        </recommendedName>
        <alternativeName>
            <fullName evidence="15">Endothelial monocyte-activating polypeptide II</fullName>
            <shortName>EMAP-II</shortName>
        </alternativeName>
        <alternativeName>
            <fullName>Small inducible cytokine subfamily E member 1</fullName>
        </alternativeName>
    </component>
</protein>
<feature type="initiator methionine" description="Removed" evidence="2">
    <location>
        <position position="1"/>
    </location>
</feature>
<feature type="chain" id="PRO_0000223395" description="Aminoacyl tRNA synthase complex-interacting multifunctional protein 1">
    <location>
        <begin position="2"/>
        <end position="310"/>
    </location>
</feature>
<feature type="chain" id="PRO_0000019244" description="Endothelial monocyte-activating polypeptide 2">
    <location>
        <begin position="145"/>
        <end position="310"/>
    </location>
</feature>
<feature type="domain" description="tRNA-binding" evidence="3">
    <location>
        <begin position="149"/>
        <end position="250"/>
    </location>
</feature>
<feature type="region of interest" description="Required for fibroblast proliferation" evidence="1">
    <location>
        <begin position="6"/>
        <end position="46"/>
    </location>
</feature>
<feature type="region of interest" description="Interaction with HSP90B1" evidence="10">
    <location>
        <begin position="54"/>
        <end position="192"/>
    </location>
</feature>
<feature type="region of interest" description="Disordered" evidence="4">
    <location>
        <begin position="92"/>
        <end position="147"/>
    </location>
</feature>
<feature type="region of interest" description="Required for endothelial cell death" evidence="1">
    <location>
        <begin position="101"/>
        <end position="115"/>
    </location>
</feature>
<feature type="region of interest" description="Required for endothelial cell migration" evidence="1">
    <location>
        <begin position="115"/>
        <end position="190"/>
    </location>
</feature>
<feature type="compositionally biased region" description="Polar residues" evidence="4">
    <location>
        <begin position="92"/>
        <end position="110"/>
    </location>
</feature>
<feature type="compositionally biased region" description="Basic and acidic residues" evidence="4">
    <location>
        <begin position="112"/>
        <end position="136"/>
    </location>
</feature>
<feature type="modified residue" description="N-acetylalanine" evidence="2">
    <location>
        <position position="2"/>
    </location>
</feature>
<feature type="modified residue" description="Phosphoserine" evidence="2">
    <location>
        <position position="138"/>
    </location>
</feature>
<feature type="modified residue" description="N6-succinyllysine" evidence="16">
    <location>
        <position position="267"/>
    </location>
</feature>
<keyword id="KW-0007">Acetylation</keyword>
<keyword id="KW-0037">Angiogenesis</keyword>
<keyword id="KW-0053">Apoptosis</keyword>
<keyword id="KW-0202">Cytokine</keyword>
<keyword id="KW-0963">Cytoplasm</keyword>
<keyword id="KW-0903">Direct protein sequencing</keyword>
<keyword id="KW-0256">Endoplasmic reticulum</keyword>
<keyword id="KW-0333">Golgi apparatus</keyword>
<keyword id="KW-0395">Inflammatory response</keyword>
<keyword id="KW-0539">Nucleus</keyword>
<keyword id="KW-0597">Phosphoprotein</keyword>
<keyword id="KW-0648">Protein biosynthesis</keyword>
<keyword id="KW-1185">Reference proteome</keyword>
<keyword id="KW-0694">RNA-binding</keyword>
<keyword id="KW-0964">Secreted</keyword>
<keyword id="KW-0820">tRNA-binding</keyword>